<accession>Q7W3E7</accession>
<gene>
    <name evidence="1" type="primary">panB</name>
    <name type="ordered locus">BPP4094</name>
</gene>
<name>PANB_BORPA</name>
<evidence type="ECO:0000255" key="1">
    <source>
        <dbReference type="HAMAP-Rule" id="MF_00156"/>
    </source>
</evidence>
<reference key="1">
    <citation type="journal article" date="2003" name="Nat. Genet.">
        <title>Comparative analysis of the genome sequences of Bordetella pertussis, Bordetella parapertussis and Bordetella bronchiseptica.</title>
        <authorList>
            <person name="Parkhill J."/>
            <person name="Sebaihia M."/>
            <person name="Preston A."/>
            <person name="Murphy L.D."/>
            <person name="Thomson N.R."/>
            <person name="Harris D.E."/>
            <person name="Holden M.T.G."/>
            <person name="Churcher C.M."/>
            <person name="Bentley S.D."/>
            <person name="Mungall K.L."/>
            <person name="Cerdeno-Tarraga A.-M."/>
            <person name="Temple L."/>
            <person name="James K.D."/>
            <person name="Harris B."/>
            <person name="Quail M.A."/>
            <person name="Achtman M."/>
            <person name="Atkin R."/>
            <person name="Baker S."/>
            <person name="Basham D."/>
            <person name="Bason N."/>
            <person name="Cherevach I."/>
            <person name="Chillingworth T."/>
            <person name="Collins M."/>
            <person name="Cronin A."/>
            <person name="Davis P."/>
            <person name="Doggett J."/>
            <person name="Feltwell T."/>
            <person name="Goble A."/>
            <person name="Hamlin N."/>
            <person name="Hauser H."/>
            <person name="Holroyd S."/>
            <person name="Jagels K."/>
            <person name="Leather S."/>
            <person name="Moule S."/>
            <person name="Norberczak H."/>
            <person name="O'Neil S."/>
            <person name="Ormond D."/>
            <person name="Price C."/>
            <person name="Rabbinowitsch E."/>
            <person name="Rutter S."/>
            <person name="Sanders M."/>
            <person name="Saunders D."/>
            <person name="Seeger K."/>
            <person name="Sharp S."/>
            <person name="Simmonds M."/>
            <person name="Skelton J."/>
            <person name="Squares R."/>
            <person name="Squares S."/>
            <person name="Stevens K."/>
            <person name="Unwin L."/>
            <person name="Whitehead S."/>
            <person name="Barrell B.G."/>
            <person name="Maskell D.J."/>
        </authorList>
    </citation>
    <scope>NUCLEOTIDE SEQUENCE [LARGE SCALE GENOMIC DNA]</scope>
    <source>
        <strain>12822 / ATCC BAA-587 / NCTC 13253</strain>
    </source>
</reference>
<dbReference type="EC" id="2.1.2.11" evidence="1"/>
<dbReference type="EMBL" id="BX640435">
    <property type="protein sequence ID" value="CAE39375.1"/>
    <property type="molecule type" value="Genomic_DNA"/>
</dbReference>
<dbReference type="RefSeq" id="WP_003815281.1">
    <property type="nucleotide sequence ID" value="NC_002928.3"/>
</dbReference>
<dbReference type="SMR" id="Q7W3E7"/>
<dbReference type="GeneID" id="93205891"/>
<dbReference type="KEGG" id="bpa:BPP4094"/>
<dbReference type="HOGENOM" id="CLU_036645_1_0_4"/>
<dbReference type="UniPathway" id="UPA00028">
    <property type="reaction ID" value="UER00003"/>
</dbReference>
<dbReference type="Proteomes" id="UP000001421">
    <property type="component" value="Chromosome"/>
</dbReference>
<dbReference type="GO" id="GO:0005737">
    <property type="term" value="C:cytoplasm"/>
    <property type="evidence" value="ECO:0007669"/>
    <property type="project" value="UniProtKB-SubCell"/>
</dbReference>
<dbReference type="GO" id="GO:0003864">
    <property type="term" value="F:3-methyl-2-oxobutanoate hydroxymethyltransferase activity"/>
    <property type="evidence" value="ECO:0007669"/>
    <property type="project" value="UniProtKB-UniRule"/>
</dbReference>
<dbReference type="GO" id="GO:0000287">
    <property type="term" value="F:magnesium ion binding"/>
    <property type="evidence" value="ECO:0007669"/>
    <property type="project" value="TreeGrafter"/>
</dbReference>
<dbReference type="GO" id="GO:0015940">
    <property type="term" value="P:pantothenate biosynthetic process"/>
    <property type="evidence" value="ECO:0007669"/>
    <property type="project" value="UniProtKB-UniRule"/>
</dbReference>
<dbReference type="CDD" id="cd06557">
    <property type="entry name" value="KPHMT-like"/>
    <property type="match status" value="1"/>
</dbReference>
<dbReference type="FunFam" id="3.20.20.60:FF:000003">
    <property type="entry name" value="3-methyl-2-oxobutanoate hydroxymethyltransferase"/>
    <property type="match status" value="1"/>
</dbReference>
<dbReference type="Gene3D" id="3.20.20.60">
    <property type="entry name" value="Phosphoenolpyruvate-binding domains"/>
    <property type="match status" value="1"/>
</dbReference>
<dbReference type="HAMAP" id="MF_00156">
    <property type="entry name" value="PanB"/>
    <property type="match status" value="1"/>
</dbReference>
<dbReference type="InterPro" id="IPR003700">
    <property type="entry name" value="Pantoate_hydroxy_MeTrfase"/>
</dbReference>
<dbReference type="InterPro" id="IPR015813">
    <property type="entry name" value="Pyrv/PenolPyrv_kinase-like_dom"/>
</dbReference>
<dbReference type="InterPro" id="IPR040442">
    <property type="entry name" value="Pyrv_kinase-like_dom_sf"/>
</dbReference>
<dbReference type="NCBIfam" id="TIGR00222">
    <property type="entry name" value="panB"/>
    <property type="match status" value="1"/>
</dbReference>
<dbReference type="NCBIfam" id="NF001452">
    <property type="entry name" value="PRK00311.1"/>
    <property type="match status" value="1"/>
</dbReference>
<dbReference type="PANTHER" id="PTHR20881">
    <property type="entry name" value="3-METHYL-2-OXOBUTANOATE HYDROXYMETHYLTRANSFERASE"/>
    <property type="match status" value="1"/>
</dbReference>
<dbReference type="PANTHER" id="PTHR20881:SF0">
    <property type="entry name" value="3-METHYL-2-OXOBUTANOATE HYDROXYMETHYLTRANSFERASE"/>
    <property type="match status" value="1"/>
</dbReference>
<dbReference type="Pfam" id="PF02548">
    <property type="entry name" value="Pantoate_transf"/>
    <property type="match status" value="1"/>
</dbReference>
<dbReference type="PIRSF" id="PIRSF000388">
    <property type="entry name" value="Pantoate_hydroxy_MeTrfase"/>
    <property type="match status" value="1"/>
</dbReference>
<dbReference type="SUPFAM" id="SSF51621">
    <property type="entry name" value="Phosphoenolpyruvate/pyruvate domain"/>
    <property type="match status" value="1"/>
</dbReference>
<comment type="function">
    <text evidence="1">Catalyzes the reversible reaction in which hydroxymethyl group from 5,10-methylenetetrahydrofolate is transferred onto alpha-ketoisovalerate to form ketopantoate.</text>
</comment>
<comment type="catalytic activity">
    <reaction evidence="1">
        <text>3-methyl-2-oxobutanoate + (6R)-5,10-methylene-5,6,7,8-tetrahydrofolate + H2O = 2-dehydropantoate + (6S)-5,6,7,8-tetrahydrofolate</text>
        <dbReference type="Rhea" id="RHEA:11824"/>
        <dbReference type="ChEBI" id="CHEBI:11561"/>
        <dbReference type="ChEBI" id="CHEBI:11851"/>
        <dbReference type="ChEBI" id="CHEBI:15377"/>
        <dbReference type="ChEBI" id="CHEBI:15636"/>
        <dbReference type="ChEBI" id="CHEBI:57453"/>
        <dbReference type="EC" id="2.1.2.11"/>
    </reaction>
</comment>
<comment type="cofactor">
    <cofactor evidence="1">
        <name>Mg(2+)</name>
        <dbReference type="ChEBI" id="CHEBI:18420"/>
    </cofactor>
    <text evidence="1">Binds 1 Mg(2+) ion per subunit.</text>
</comment>
<comment type="pathway">
    <text evidence="1">Cofactor biosynthesis; (R)-pantothenate biosynthesis; (R)-pantoate from 3-methyl-2-oxobutanoate: step 1/2.</text>
</comment>
<comment type="subunit">
    <text evidence="1">Homodecamer; pentamer of dimers.</text>
</comment>
<comment type="subcellular location">
    <subcellularLocation>
        <location evidence="1">Cytoplasm</location>
    </subcellularLocation>
</comment>
<comment type="similarity">
    <text evidence="1">Belongs to the PanB family.</text>
</comment>
<feature type="chain" id="PRO_0000184822" description="3-methyl-2-oxobutanoate hydroxymethyltransferase">
    <location>
        <begin position="1"/>
        <end position="278"/>
    </location>
</feature>
<feature type="active site" description="Proton acceptor" evidence="1">
    <location>
        <position position="186"/>
    </location>
</feature>
<feature type="binding site" evidence="1">
    <location>
        <begin position="49"/>
        <end position="50"/>
    </location>
    <ligand>
        <name>3-methyl-2-oxobutanoate</name>
        <dbReference type="ChEBI" id="CHEBI:11851"/>
    </ligand>
</feature>
<feature type="binding site" evidence="1">
    <location>
        <position position="49"/>
    </location>
    <ligand>
        <name>Mg(2+)</name>
        <dbReference type="ChEBI" id="CHEBI:18420"/>
    </ligand>
</feature>
<feature type="binding site" evidence="1">
    <location>
        <position position="88"/>
    </location>
    <ligand>
        <name>3-methyl-2-oxobutanoate</name>
        <dbReference type="ChEBI" id="CHEBI:11851"/>
    </ligand>
</feature>
<feature type="binding site" evidence="1">
    <location>
        <position position="88"/>
    </location>
    <ligand>
        <name>Mg(2+)</name>
        <dbReference type="ChEBI" id="CHEBI:18420"/>
    </ligand>
</feature>
<feature type="binding site" evidence="1">
    <location>
        <position position="118"/>
    </location>
    <ligand>
        <name>3-methyl-2-oxobutanoate</name>
        <dbReference type="ChEBI" id="CHEBI:11851"/>
    </ligand>
</feature>
<feature type="binding site" evidence="1">
    <location>
        <position position="120"/>
    </location>
    <ligand>
        <name>Mg(2+)</name>
        <dbReference type="ChEBI" id="CHEBI:18420"/>
    </ligand>
</feature>
<sequence length="278" mass="29189">MSVPTAAKRITTRQLRMRTPDEPIVALTAYTAPIAGLLDAHCDLLLVGDSLGMVIYGMETTLPVTVDMMIQHGRAVMRGSQRACVAVDMPFGSYQEDERQAYRNAARIMAETGASCVKLEGGAEMASTVAFLVERGIPVMGHVGLKPQSVHGHGGFRTVGRGAEAEQVMADAQAIAAAGAFTVVIEGTLEPVARAITEALPVPTIGIGASPACGGQILVSDDVLGLFSDFTPRFVKRYAQLGPIIEQAAAAYASEVRARTFPAPEHCTGMPAPDGRPA</sequence>
<proteinExistence type="inferred from homology"/>
<keyword id="KW-0963">Cytoplasm</keyword>
<keyword id="KW-0460">Magnesium</keyword>
<keyword id="KW-0479">Metal-binding</keyword>
<keyword id="KW-0566">Pantothenate biosynthesis</keyword>
<keyword id="KW-0808">Transferase</keyword>
<protein>
    <recommendedName>
        <fullName evidence="1">3-methyl-2-oxobutanoate hydroxymethyltransferase</fullName>
        <ecNumber evidence="1">2.1.2.11</ecNumber>
    </recommendedName>
    <alternativeName>
        <fullName evidence="1">Ketopantoate hydroxymethyltransferase</fullName>
        <shortName evidence="1">KPHMT</shortName>
    </alternativeName>
</protein>
<organism>
    <name type="scientific">Bordetella parapertussis (strain 12822 / ATCC BAA-587 / NCTC 13253)</name>
    <dbReference type="NCBI Taxonomy" id="257311"/>
    <lineage>
        <taxon>Bacteria</taxon>
        <taxon>Pseudomonadati</taxon>
        <taxon>Pseudomonadota</taxon>
        <taxon>Betaproteobacteria</taxon>
        <taxon>Burkholderiales</taxon>
        <taxon>Alcaligenaceae</taxon>
        <taxon>Bordetella</taxon>
    </lineage>
</organism>